<protein>
    <recommendedName>
        <fullName>Receptor activity-modifying protein 1</fullName>
    </recommendedName>
</protein>
<organism>
    <name type="scientific">Mus musculus</name>
    <name type="common">Mouse</name>
    <dbReference type="NCBI Taxonomy" id="10090"/>
    <lineage>
        <taxon>Eukaryota</taxon>
        <taxon>Metazoa</taxon>
        <taxon>Chordata</taxon>
        <taxon>Craniata</taxon>
        <taxon>Vertebrata</taxon>
        <taxon>Euteleostomi</taxon>
        <taxon>Mammalia</taxon>
        <taxon>Eutheria</taxon>
        <taxon>Euarchontoglires</taxon>
        <taxon>Glires</taxon>
        <taxon>Rodentia</taxon>
        <taxon>Myomorpha</taxon>
        <taxon>Muroidea</taxon>
        <taxon>Muridae</taxon>
        <taxon>Murinae</taxon>
        <taxon>Mus</taxon>
        <taxon>Mus</taxon>
    </lineage>
</organism>
<comment type="function">
    <text evidence="1 4 5">Accessory protein that interacts with and modulates the function of G-protein coupled receptors including calcitonin gene-related peptide type 1 receptor (CALCRL) and calcitonin receptor (CALCR). Required for the transport of CALCRL to the plasma membrane (PubMed:10854696, PubMed:12147211). Together with CALCRL, form the receptor complex for the calcitonin gene-related peptides CGRP1/CALCA and CGRP2/CALCB. Together with CALCR, form the AMYR1 receptor complex for amylin/IAPP and CGRP1/CALCA (By similarity).</text>
</comment>
<comment type="subunit">
    <text evidence="1">Heterodimer of CALCRL and RAMP1; the interaction induces allosteric modulation of CALCRL function and CGRP1/CALCA and CGRP2/CALCB ligand specificity. Heterodimer of CALCR and RAMP1; interaction forms the AMYR1 receptor complex for amylin/IAPP and CGRP1/CALCA ligands.</text>
</comment>
<comment type="subcellular location">
    <subcellularLocation>
        <location evidence="1">Cell membrane</location>
        <topology evidence="1">Single-pass type I membrane protein</topology>
    </subcellularLocation>
</comment>
<comment type="tissue specificity">
    <text evidence="3 4 5">Expressed predominantly in the thymus, skeletal muscle, embryonic and adult brain, embryonic and adult lung, and colon.</text>
</comment>
<comment type="similarity">
    <text evidence="6">Belongs to the RAMP family.</text>
</comment>
<sequence>MAPGLRGLPRCGLWLLLAHHLFMVTACRDPDYGTLIQELCLSRFKENMETIGKTLWCDWGKTIQSYGELTYCTKHVAHTIGCFWPNPEVDRFFIAVHHRYFSKCPISGRALRDPPNSILCPFIALPITVTLLMTALVVWRSKRTEGIV</sequence>
<evidence type="ECO:0000250" key="1">
    <source>
        <dbReference type="UniProtKB" id="O60894"/>
    </source>
</evidence>
<evidence type="ECO:0000255" key="2"/>
<evidence type="ECO:0000269" key="3">
    <source>
    </source>
</evidence>
<evidence type="ECO:0000269" key="4">
    <source>
    </source>
</evidence>
<evidence type="ECO:0000269" key="5">
    <source>
    </source>
</evidence>
<evidence type="ECO:0000305" key="6"/>
<evidence type="ECO:0000312" key="7">
    <source>
        <dbReference type="MGI" id="MGI:1858418"/>
    </source>
</evidence>
<feature type="signal peptide" evidence="2">
    <location>
        <begin position="1"/>
        <end position="26"/>
    </location>
</feature>
<feature type="chain" id="PRO_0000030169" description="Receptor activity-modifying protein 1">
    <location>
        <begin position="27"/>
        <end position="148"/>
    </location>
</feature>
<feature type="topological domain" description="Extracellular" evidence="2">
    <location>
        <begin position="27"/>
        <end position="118"/>
    </location>
</feature>
<feature type="transmembrane region" description="Helical" evidence="1">
    <location>
        <begin position="119"/>
        <end position="140"/>
    </location>
</feature>
<feature type="topological domain" description="Cytoplasmic" evidence="2">
    <location>
        <begin position="141"/>
        <end position="148"/>
    </location>
</feature>
<feature type="disulfide bond">
    <location>
        <begin position="27"/>
        <end position="82"/>
    </location>
</feature>
<feature type="disulfide bond" evidence="1">
    <location>
        <begin position="40"/>
        <end position="72"/>
    </location>
</feature>
<feature type="disulfide bond" evidence="1">
    <location>
        <begin position="57"/>
        <end position="104"/>
    </location>
</feature>
<gene>
    <name evidence="7" type="primary">Ramp1</name>
</gene>
<proteinExistence type="evidence at protein level"/>
<keyword id="KW-1003">Cell membrane</keyword>
<keyword id="KW-1015">Disulfide bond</keyword>
<keyword id="KW-0472">Membrane</keyword>
<keyword id="KW-0675">Receptor</keyword>
<keyword id="KW-1185">Reference proteome</keyword>
<keyword id="KW-0732">Signal</keyword>
<keyword id="KW-0812">Transmembrane</keyword>
<keyword id="KW-1133">Transmembrane helix</keyword>
<keyword id="KW-0813">Transport</keyword>
<name>RAMP1_MOUSE</name>
<accession>Q9WTJ5</accession>
<reference key="1">
    <citation type="journal article" date="2002" name="Neuropeptides">
        <title>Molecular cloning and characterization of mouse calcitonin gene-related peptide receptor.</title>
        <authorList>
            <person name="Miyauchi K."/>
            <person name="Tadotsu N."/>
            <person name="Hayashi T."/>
            <person name="Ono Y."/>
            <person name="Tokoyoda K."/>
            <person name="Tsujikawa K."/>
            <person name="Yamamoto H."/>
        </authorList>
    </citation>
    <scope>NUCLEOTIDE SEQUENCE [MRNA]</scope>
    <scope>FUNCTION</scope>
    <scope>TISSUE SPECIFICITY</scope>
    <source>
        <strain>C57BL/6J</strain>
        <tissue>Spleen</tissue>
    </source>
</reference>
<reference key="2">
    <citation type="submission" date="1999-04" db="EMBL/GenBank/DDBJ databases">
        <title>Cloning and sequencing of mouse CGRP/adrenomedullin receptor subunits.</title>
        <authorList>
            <person name="Derst C."/>
            <person name="Preisig-Mueller R."/>
            <person name="Gerhardus J."/>
            <person name="Daut J."/>
        </authorList>
    </citation>
    <scope>NUCLEOTIDE SEQUENCE [MRNA]</scope>
</reference>
<reference key="3">
    <citation type="journal article" date="2000" name="Mol. Cell. Endocrinol.">
        <title>Mouse receptor-activity-modifying proteins 1, -2 and -3: amino acid sequence, expression and function.</title>
        <authorList>
            <person name="Husmann K."/>
            <person name="Sexton P.M."/>
            <person name="Fischer J.A."/>
            <person name="Born W."/>
        </authorList>
    </citation>
    <scope>NUCLEOTIDE SEQUENCE [MRNA]</scope>
    <scope>FUNCTION</scope>
    <scope>TISSUE SPECIFICITY</scope>
</reference>
<reference key="4">
    <citation type="journal article" date="2000" name="Biochem. Biophys. Res. Commun.">
        <title>Decreased gene expression of adrenomedullin receptor in mouse lungs during sepsis.</title>
        <authorList>
            <person name="Ono Y."/>
            <person name="Okano I."/>
            <person name="Kojima M."/>
            <person name="Okada K."/>
            <person name="Kangawa K."/>
        </authorList>
    </citation>
    <scope>NUCLEOTIDE SEQUENCE [MRNA]</scope>
    <scope>TISSUE SPECIFICITY</scope>
    <source>
        <strain>C57BL/6J</strain>
        <tissue>Brain</tissue>
    </source>
</reference>
<reference key="5">
    <citation type="journal article" date="2004" name="Genome Res.">
        <title>The status, quality, and expansion of the NIH full-length cDNA project: the Mammalian Gene Collection (MGC).</title>
        <authorList>
            <consortium name="The MGC Project Team"/>
        </authorList>
    </citation>
    <scope>NUCLEOTIDE SEQUENCE [LARGE SCALE MRNA]</scope>
    <source>
        <tissue>Colon</tissue>
    </source>
</reference>
<reference key="6">
    <citation type="journal article" date="2010" name="Cell">
        <title>A tissue-specific atlas of mouse protein phosphorylation and expression.</title>
        <authorList>
            <person name="Huttlin E.L."/>
            <person name="Jedrychowski M.P."/>
            <person name="Elias J.E."/>
            <person name="Goswami T."/>
            <person name="Rad R."/>
            <person name="Beausoleil S.A."/>
            <person name="Villen J."/>
            <person name="Haas W."/>
            <person name="Sowa M.E."/>
            <person name="Gygi S.P."/>
        </authorList>
    </citation>
    <scope>IDENTIFICATION BY MASS SPECTROMETRY [LARGE SCALE ANALYSIS]</scope>
    <source>
        <tissue>Brain</tissue>
    </source>
</reference>
<dbReference type="EMBL" id="AB019046">
    <property type="protein sequence ID" value="BAA76617.1"/>
    <property type="molecule type" value="mRNA"/>
</dbReference>
<dbReference type="EMBL" id="AF146522">
    <property type="protein sequence ID" value="AAD35018.1"/>
    <property type="molecule type" value="mRNA"/>
</dbReference>
<dbReference type="EMBL" id="AJ250489">
    <property type="protein sequence ID" value="CAB59511.1"/>
    <property type="molecule type" value="mRNA"/>
</dbReference>
<dbReference type="EMBL" id="AF209904">
    <property type="protein sequence ID" value="AAF21036.1"/>
    <property type="molecule type" value="mRNA"/>
</dbReference>
<dbReference type="EMBL" id="BC012644">
    <property type="protein sequence ID" value="AAH12644.1"/>
    <property type="molecule type" value="mRNA"/>
</dbReference>
<dbReference type="CCDS" id="CCDS15158.1"/>
<dbReference type="PIR" id="JC7261">
    <property type="entry name" value="JC7261"/>
</dbReference>
<dbReference type="RefSeq" id="NP_058590.1">
    <property type="nucleotide sequence ID" value="NM_016894.3"/>
</dbReference>
<dbReference type="SMR" id="Q9WTJ5"/>
<dbReference type="ComplexPortal" id="CPX-3149">
    <property type="entry name" value="CGRP receptor complex"/>
</dbReference>
<dbReference type="ComplexPortal" id="CPX-3235">
    <property type="entry name" value="Amylin receptor 1 complex"/>
</dbReference>
<dbReference type="CORUM" id="Q9WTJ5"/>
<dbReference type="FunCoup" id="Q9WTJ5">
    <property type="interactions" value="109"/>
</dbReference>
<dbReference type="STRING" id="10090.ENSMUSP00000095253"/>
<dbReference type="GuidetoPHARMACOLOGY" id="51"/>
<dbReference type="iPTMnet" id="Q9WTJ5"/>
<dbReference type="PhosphoSitePlus" id="Q9WTJ5"/>
<dbReference type="PaxDb" id="10090-ENSMUSP00000095253"/>
<dbReference type="ProteomicsDB" id="255091"/>
<dbReference type="Antibodypedia" id="34486">
    <property type="antibodies" value="230 antibodies from 38 providers"/>
</dbReference>
<dbReference type="DNASU" id="51801"/>
<dbReference type="Ensembl" id="ENSMUST00000097648.6">
    <property type="protein sequence ID" value="ENSMUSP00000095253.5"/>
    <property type="gene ID" value="ENSMUSG00000034353.15"/>
</dbReference>
<dbReference type="GeneID" id="51801"/>
<dbReference type="KEGG" id="mmu:51801"/>
<dbReference type="UCSC" id="uc007bzx.2">
    <property type="organism name" value="mouse"/>
</dbReference>
<dbReference type="AGR" id="MGI:1858418"/>
<dbReference type="CTD" id="10267"/>
<dbReference type="MGI" id="MGI:1858418">
    <property type="gene designation" value="Ramp1"/>
</dbReference>
<dbReference type="VEuPathDB" id="HostDB:ENSMUSG00000034353"/>
<dbReference type="eggNOG" id="ENOG502S0TC">
    <property type="taxonomic scope" value="Eukaryota"/>
</dbReference>
<dbReference type="GeneTree" id="ENSGT00940000159224"/>
<dbReference type="HOGENOM" id="CLU_116349_3_0_1"/>
<dbReference type="InParanoid" id="Q9WTJ5"/>
<dbReference type="OMA" id="CYWPNRM"/>
<dbReference type="OrthoDB" id="10007519at2759"/>
<dbReference type="PhylomeDB" id="Q9WTJ5"/>
<dbReference type="TreeFam" id="TF333286"/>
<dbReference type="Reactome" id="R-MMU-418555">
    <property type="pathway name" value="G alpha (s) signalling events"/>
</dbReference>
<dbReference type="Reactome" id="R-MMU-419812">
    <property type="pathway name" value="Calcitonin-like ligand receptors"/>
</dbReference>
<dbReference type="BioGRID-ORCS" id="51801">
    <property type="hits" value="1 hit in 79 CRISPR screens"/>
</dbReference>
<dbReference type="ChiTaRS" id="Ramp1">
    <property type="organism name" value="mouse"/>
</dbReference>
<dbReference type="PRO" id="PR:Q9WTJ5"/>
<dbReference type="Proteomes" id="UP000000589">
    <property type="component" value="Chromosome 1"/>
</dbReference>
<dbReference type="RNAct" id="Q9WTJ5">
    <property type="molecule type" value="protein"/>
</dbReference>
<dbReference type="Bgee" id="ENSMUSG00000034353">
    <property type="expression patterns" value="Expressed in temporalis muscle and 212 other cell types or tissues"/>
</dbReference>
<dbReference type="ExpressionAtlas" id="Q9WTJ5">
    <property type="expression patterns" value="baseline and differential"/>
</dbReference>
<dbReference type="GO" id="GO:0009986">
    <property type="term" value="C:cell surface"/>
    <property type="evidence" value="ECO:0007669"/>
    <property type="project" value="Ensembl"/>
</dbReference>
<dbReference type="GO" id="GO:1990406">
    <property type="term" value="C:CGRP receptor complex"/>
    <property type="evidence" value="ECO:0007669"/>
    <property type="project" value="Ensembl"/>
</dbReference>
<dbReference type="GO" id="GO:0097643">
    <property type="term" value="F:amylin receptor activity"/>
    <property type="evidence" value="ECO:0007669"/>
    <property type="project" value="Ensembl"/>
</dbReference>
<dbReference type="GO" id="GO:1990407">
    <property type="term" value="F:calcitonin gene-related peptide binding"/>
    <property type="evidence" value="ECO:0007669"/>
    <property type="project" value="Ensembl"/>
</dbReference>
<dbReference type="GO" id="GO:0001635">
    <property type="term" value="F:calcitonin gene-related peptide receptor activity"/>
    <property type="evidence" value="ECO:0007669"/>
    <property type="project" value="Ensembl"/>
</dbReference>
<dbReference type="GO" id="GO:0015026">
    <property type="term" value="F:coreceptor activity"/>
    <property type="evidence" value="ECO:0000314"/>
    <property type="project" value="MGI"/>
</dbReference>
<dbReference type="GO" id="GO:0007189">
    <property type="term" value="P:adenylate cyclase-activating G protein-coupled receptor signaling pathway"/>
    <property type="evidence" value="ECO:0007669"/>
    <property type="project" value="Ensembl"/>
</dbReference>
<dbReference type="GO" id="GO:0150059">
    <property type="term" value="P:amylin receptor 1 signaling pathway"/>
    <property type="evidence" value="ECO:0007669"/>
    <property type="project" value="Ensembl"/>
</dbReference>
<dbReference type="GO" id="GO:0001525">
    <property type="term" value="P:angiogenesis"/>
    <property type="evidence" value="ECO:0007669"/>
    <property type="project" value="Ensembl"/>
</dbReference>
<dbReference type="GO" id="GO:1990408">
    <property type="term" value="P:calcitonin gene-related peptide receptor signaling pathway"/>
    <property type="evidence" value="ECO:0007669"/>
    <property type="project" value="Ensembl"/>
</dbReference>
<dbReference type="GO" id="GO:0006816">
    <property type="term" value="P:calcium ion transport"/>
    <property type="evidence" value="ECO:0007669"/>
    <property type="project" value="Ensembl"/>
</dbReference>
<dbReference type="GO" id="GO:0007186">
    <property type="term" value="P:G protein-coupled receptor signaling pathway"/>
    <property type="evidence" value="ECO:0000353"/>
    <property type="project" value="MGI"/>
</dbReference>
<dbReference type="GO" id="GO:0006886">
    <property type="term" value="P:intracellular protein transport"/>
    <property type="evidence" value="ECO:0007669"/>
    <property type="project" value="InterPro"/>
</dbReference>
<dbReference type="GO" id="GO:0060050">
    <property type="term" value="P:positive regulation of protein glycosylation"/>
    <property type="evidence" value="ECO:0007669"/>
    <property type="project" value="Ensembl"/>
</dbReference>
<dbReference type="GO" id="GO:0072659">
    <property type="term" value="P:protein localization to plasma membrane"/>
    <property type="evidence" value="ECO:0007669"/>
    <property type="project" value="Ensembl"/>
</dbReference>
<dbReference type="GO" id="GO:0031623">
    <property type="term" value="P:receptor internalization"/>
    <property type="evidence" value="ECO:0007669"/>
    <property type="project" value="Ensembl"/>
</dbReference>
<dbReference type="GO" id="GO:0008277">
    <property type="term" value="P:regulation of G protein-coupled receptor signaling pathway"/>
    <property type="evidence" value="ECO:0007669"/>
    <property type="project" value="InterPro"/>
</dbReference>
<dbReference type="FunFam" id="1.10.150.510:FF:000002">
    <property type="entry name" value="Receptor activity-modifying protein 1"/>
    <property type="match status" value="1"/>
</dbReference>
<dbReference type="Gene3D" id="1.10.150.510">
    <property type="entry name" value="Receptor activity modifying family"/>
    <property type="match status" value="1"/>
</dbReference>
<dbReference type="InterPro" id="IPR006985">
    <property type="entry name" value="RAMP"/>
</dbReference>
<dbReference type="InterPro" id="IPR038126">
    <property type="entry name" value="RAMP_sf"/>
</dbReference>
<dbReference type="PANTHER" id="PTHR14076">
    <property type="entry name" value="RECEPTOR ACTIVITY MODIFYING PROTEIN RAMP"/>
    <property type="match status" value="1"/>
</dbReference>
<dbReference type="PANTHER" id="PTHR14076:SF3">
    <property type="entry name" value="RECEPTOR ACTIVITY-MODIFYING PROTEIN 1"/>
    <property type="match status" value="1"/>
</dbReference>
<dbReference type="Pfam" id="PF04901">
    <property type="entry name" value="RAMP"/>
    <property type="match status" value="1"/>
</dbReference>